<comment type="miscellaneous">
    <text evidence="1">Present with 3970 molecules/cell in log phase SD medium.</text>
</comment>
<name>YFI8_YEAST</name>
<gene>
    <name type="ordered locus">YFR018C</name>
</gene>
<keyword id="KW-0012">Acyltransferase</keyword>
<keyword id="KW-1185">Reference proteome</keyword>
<keyword id="KW-0808">Transferase</keyword>
<proteinExistence type="evidence at protein level"/>
<feature type="chain" id="PRO_0000202688" description="Uncharacterized protein YFR018C">
    <location>
        <begin position="1"/>
        <end position="363"/>
    </location>
</feature>
<evidence type="ECO:0000269" key="1">
    <source>
    </source>
</evidence>
<accession>P43599</accession>
<accession>D6VTP9</accession>
<reference key="1">
    <citation type="journal article" date="1995" name="Nat. Genet.">
        <title>Analysis of the nucleotide sequence of chromosome VI from Saccharomyces cerevisiae.</title>
        <authorList>
            <person name="Murakami Y."/>
            <person name="Naitou M."/>
            <person name="Hagiwara H."/>
            <person name="Shibata T."/>
            <person name="Ozawa M."/>
            <person name="Sasanuma S."/>
            <person name="Sasanuma M."/>
            <person name="Tsuchiya Y."/>
            <person name="Soeda E."/>
            <person name="Yokoyama K."/>
            <person name="Yamazaki M."/>
            <person name="Tashiro H."/>
            <person name="Eki T."/>
        </authorList>
    </citation>
    <scope>NUCLEOTIDE SEQUENCE [LARGE SCALE GENOMIC DNA]</scope>
    <source>
        <strain>ATCC 204508 / S288c</strain>
    </source>
</reference>
<reference key="2">
    <citation type="journal article" date="2014" name="G3 (Bethesda)">
        <title>The reference genome sequence of Saccharomyces cerevisiae: Then and now.</title>
        <authorList>
            <person name="Engel S.R."/>
            <person name="Dietrich F.S."/>
            <person name="Fisk D.G."/>
            <person name="Binkley G."/>
            <person name="Balakrishnan R."/>
            <person name="Costanzo M.C."/>
            <person name="Dwight S.S."/>
            <person name="Hitz B.C."/>
            <person name="Karra K."/>
            <person name="Nash R.S."/>
            <person name="Weng S."/>
            <person name="Wong E.D."/>
            <person name="Lloyd P."/>
            <person name="Skrzypek M.S."/>
            <person name="Miyasato S.R."/>
            <person name="Simison M."/>
            <person name="Cherry J.M."/>
        </authorList>
    </citation>
    <scope>GENOME REANNOTATION</scope>
    <source>
        <strain>ATCC 204508 / S288c</strain>
    </source>
</reference>
<reference key="3">
    <citation type="journal article" date="2007" name="Genome Res.">
        <title>Approaching a complete repository of sequence-verified protein-encoding clones for Saccharomyces cerevisiae.</title>
        <authorList>
            <person name="Hu Y."/>
            <person name="Rolfs A."/>
            <person name="Bhullar B."/>
            <person name="Murthy T.V.S."/>
            <person name="Zhu C."/>
            <person name="Berger M.F."/>
            <person name="Camargo A.A."/>
            <person name="Kelley F."/>
            <person name="McCarron S."/>
            <person name="Jepson D."/>
            <person name="Richardson A."/>
            <person name="Raphael J."/>
            <person name="Moreira D."/>
            <person name="Taycher E."/>
            <person name="Zuo D."/>
            <person name="Mohr S."/>
            <person name="Kane M.F."/>
            <person name="Williamson J."/>
            <person name="Simpson A.J.G."/>
            <person name="Bulyk M.L."/>
            <person name="Harlow E."/>
            <person name="Marsischky G."/>
            <person name="Kolodner R.D."/>
            <person name="LaBaer J."/>
        </authorList>
    </citation>
    <scope>NUCLEOTIDE SEQUENCE [GENOMIC DNA]</scope>
    <source>
        <strain>ATCC 204508 / S288c</strain>
    </source>
</reference>
<reference key="4">
    <citation type="journal article" date="2003" name="Nature">
        <title>Global analysis of protein expression in yeast.</title>
        <authorList>
            <person name="Ghaemmaghami S."/>
            <person name="Huh W.-K."/>
            <person name="Bower K."/>
            <person name="Howson R.W."/>
            <person name="Belle A."/>
            <person name="Dephoure N."/>
            <person name="O'Shea E.K."/>
            <person name="Weissman J.S."/>
        </authorList>
    </citation>
    <scope>LEVEL OF PROTEIN EXPRESSION [LARGE SCALE ANALYSIS]</scope>
</reference>
<protein>
    <recommendedName>
        <fullName>Uncharacterized protein YFR018C</fullName>
    </recommendedName>
</protein>
<sequence length="363" mass="41031">MGMKYVLPLRLIGLAYLLVLFQVHRVTGWELSYEQYHAAHLNEAINPDSGWNKSTKNLLLPFNRTRVPGSEGSREIQRFIIEHFNNTLAGEWAVETQAFEENGYRFNNLVMTLQNNASEYLVLAAHYDTKIAPTGMVGAIDSAASCAALLYTAQFLTHIACHERTKEYNDLESNTVVSNSTLGVKIVFFDGEEAIEEWGPEDSIYGARRLAAQWLADGTMTRIRLLFLLDLLGSGEEEPLVPSYYAETHQEYQLLNRIEDDLLFRRGDEINGESALAAEVARQRKHLDPTDYRFLGLGHSVIGDDHTPFLAAGVPVLHAIPLPFPSTWHTVDDDFRHLDAAETRHWALLVCEFVVQSLRSRNQ</sequence>
<organism>
    <name type="scientific">Saccharomyces cerevisiae (strain ATCC 204508 / S288c)</name>
    <name type="common">Baker's yeast</name>
    <dbReference type="NCBI Taxonomy" id="559292"/>
    <lineage>
        <taxon>Eukaryota</taxon>
        <taxon>Fungi</taxon>
        <taxon>Dikarya</taxon>
        <taxon>Ascomycota</taxon>
        <taxon>Saccharomycotina</taxon>
        <taxon>Saccharomycetes</taxon>
        <taxon>Saccharomycetales</taxon>
        <taxon>Saccharomycetaceae</taxon>
        <taxon>Saccharomyces</taxon>
    </lineage>
</organism>
<dbReference type="EMBL" id="D50617">
    <property type="protein sequence ID" value="BAA09257.1"/>
    <property type="molecule type" value="Genomic_DNA"/>
</dbReference>
<dbReference type="EMBL" id="AY692564">
    <property type="protein sequence ID" value="AAT92583.1"/>
    <property type="molecule type" value="Genomic_DNA"/>
</dbReference>
<dbReference type="EMBL" id="BK006940">
    <property type="protein sequence ID" value="DAA12459.1"/>
    <property type="molecule type" value="Genomic_DNA"/>
</dbReference>
<dbReference type="PIR" id="S56273">
    <property type="entry name" value="S56273"/>
</dbReference>
<dbReference type="RefSeq" id="NP_116673.1">
    <property type="nucleotide sequence ID" value="NM_001179983.1"/>
</dbReference>
<dbReference type="SMR" id="P43599"/>
<dbReference type="BioGRID" id="31171">
    <property type="interactions" value="50"/>
</dbReference>
<dbReference type="DIP" id="DIP-5527N"/>
<dbReference type="FunCoup" id="P43599">
    <property type="interactions" value="207"/>
</dbReference>
<dbReference type="STRING" id="4932.YFR018C"/>
<dbReference type="PaxDb" id="4932-YFR018C"/>
<dbReference type="PeptideAtlas" id="P43599"/>
<dbReference type="EnsemblFungi" id="YFR018C_mRNA">
    <property type="protein sequence ID" value="YFR018C"/>
    <property type="gene ID" value="YFR018C"/>
</dbReference>
<dbReference type="GeneID" id="850573"/>
<dbReference type="KEGG" id="sce:YFR018C"/>
<dbReference type="AGR" id="SGD:S000001914"/>
<dbReference type="SGD" id="S000001914">
    <property type="gene designation" value="YFR018C"/>
</dbReference>
<dbReference type="VEuPathDB" id="FungiDB:YFR018C"/>
<dbReference type="eggNOG" id="KOG3946">
    <property type="taxonomic scope" value="Eukaryota"/>
</dbReference>
<dbReference type="GeneTree" id="ENSGT00390000003107"/>
<dbReference type="HOGENOM" id="CLU_045003_1_1_1"/>
<dbReference type="InParanoid" id="P43599"/>
<dbReference type="OMA" id="TPFPSFW"/>
<dbReference type="OrthoDB" id="3907302at2759"/>
<dbReference type="BioCyc" id="YEAST:G3O-30470-MONOMER"/>
<dbReference type="Reactome" id="R-SCE-6798695">
    <property type="pathway name" value="Neutrophil degranulation"/>
</dbReference>
<dbReference type="BioGRID-ORCS" id="850573">
    <property type="hits" value="5 hits in 10 CRISPR screens"/>
</dbReference>
<dbReference type="PRO" id="PR:P43599"/>
<dbReference type="Proteomes" id="UP000002311">
    <property type="component" value="Chromosome VI"/>
</dbReference>
<dbReference type="RNAct" id="P43599">
    <property type="molecule type" value="protein"/>
</dbReference>
<dbReference type="GO" id="GO:0005783">
    <property type="term" value="C:endoplasmic reticulum"/>
    <property type="evidence" value="ECO:0007005"/>
    <property type="project" value="SGD"/>
</dbReference>
<dbReference type="GO" id="GO:0016603">
    <property type="term" value="F:glutaminyl-peptide cyclotransferase activity"/>
    <property type="evidence" value="ECO:0000318"/>
    <property type="project" value="GO_Central"/>
</dbReference>
<dbReference type="GO" id="GO:0008270">
    <property type="term" value="F:zinc ion binding"/>
    <property type="evidence" value="ECO:0000318"/>
    <property type="project" value="GO_Central"/>
</dbReference>
<dbReference type="CDD" id="cd03880">
    <property type="entry name" value="M28_QC_like"/>
    <property type="match status" value="1"/>
</dbReference>
<dbReference type="FunFam" id="3.40.630.10:FF:000081">
    <property type="entry name" value="Peptide hydrolase"/>
    <property type="match status" value="1"/>
</dbReference>
<dbReference type="Gene3D" id="3.40.630.10">
    <property type="entry name" value="Zn peptidases"/>
    <property type="match status" value="1"/>
</dbReference>
<dbReference type="InterPro" id="IPR037457">
    <property type="entry name" value="M28_QC"/>
</dbReference>
<dbReference type="InterPro" id="IPR007484">
    <property type="entry name" value="Peptidase_M28"/>
</dbReference>
<dbReference type="InterPro" id="IPR040234">
    <property type="entry name" value="QC/QCL"/>
</dbReference>
<dbReference type="PANTHER" id="PTHR12283">
    <property type="entry name" value="GLUTAMINYL-PEPTIDE CYCLOTRANSFERASE"/>
    <property type="match status" value="1"/>
</dbReference>
<dbReference type="PANTHER" id="PTHR12283:SF6">
    <property type="entry name" value="GLUTAMINYL-PEPTIDE CYCLOTRANSFERASE-RELATED"/>
    <property type="match status" value="1"/>
</dbReference>
<dbReference type="Pfam" id="PF04389">
    <property type="entry name" value="Peptidase_M28"/>
    <property type="match status" value="1"/>
</dbReference>
<dbReference type="SUPFAM" id="SSF53187">
    <property type="entry name" value="Zn-dependent exopeptidases"/>
    <property type="match status" value="1"/>
</dbReference>